<comment type="function">
    <text evidence="1">Cleaves peptides in various proteins in a process that requires ATP hydrolysis. Has a chymotrypsin-like activity. Plays a major role in the degradation of misfolded proteins.</text>
</comment>
<comment type="catalytic activity">
    <reaction evidence="1">
        <text>Hydrolysis of proteins to small peptides in the presence of ATP and magnesium. alpha-casein is the usual test substrate. In the absence of ATP, only oligopeptides shorter than five residues are hydrolyzed (such as succinyl-Leu-Tyr-|-NHMec, and Leu-Tyr-Leu-|-Tyr-Trp, in which cleavage of the -Tyr-|-Leu- and -Tyr-|-Trp bonds also occurs).</text>
        <dbReference type="EC" id="3.4.21.92"/>
    </reaction>
</comment>
<comment type="subunit">
    <text evidence="1">Fourteen ClpP subunits assemble into 2 heptameric rings which stack back to back to give a disk-like structure with a central cavity, resembling the structure of eukaryotic proteasomes.</text>
</comment>
<comment type="subcellular location">
    <subcellularLocation>
        <location evidence="1">Cytoplasm</location>
    </subcellularLocation>
</comment>
<comment type="similarity">
    <text evidence="1">Belongs to the peptidase S14 family.</text>
</comment>
<comment type="sequence caution" evidence="3">
    <conflict type="erroneous initiation">
        <sequence resource="EMBL-CDS" id="AAC44552"/>
    </conflict>
</comment>
<organism>
    <name type="scientific">Paracoccus denitrificans</name>
    <dbReference type="NCBI Taxonomy" id="266"/>
    <lineage>
        <taxon>Bacteria</taxon>
        <taxon>Pseudomonadati</taxon>
        <taxon>Pseudomonadota</taxon>
        <taxon>Alphaproteobacteria</taxon>
        <taxon>Rhodobacterales</taxon>
        <taxon>Paracoccaceae</taxon>
        <taxon>Paracoccus</taxon>
    </lineage>
</organism>
<reference key="1">
    <citation type="submission" date="1995-10" db="EMBL/GenBank/DDBJ databases">
        <authorList>
            <person name="Ras J."/>
        </authorList>
    </citation>
    <scope>NUCLEOTIDE SEQUENCE [GENOMIC DNA]</scope>
</reference>
<proteinExistence type="inferred from homology"/>
<protein>
    <recommendedName>
        <fullName evidence="1">ATP-dependent Clp protease proteolytic subunit</fullName>
        <ecNumber evidence="1">3.4.21.92</ecNumber>
    </recommendedName>
    <alternativeName>
        <fullName evidence="1">Endopeptidase Clp</fullName>
    </alternativeName>
</protein>
<gene>
    <name evidence="1" type="primary">clpP</name>
</gene>
<sequence length="199" mass="21742">MTTSAARKGLRTRGSACPRATRSASSISSRAQVIVAGPITDKLAQRTVAHLLALAEDSDEPINMLISSPGGHVESGDMIHDVIKFIRPTVRTIGLAWVASAGALIFVGADKENRYCLPNTRFLIHQPSVGIGGTSTDMMIQAEQVRLMRDRLNQIFAEATGQPVERIEKDTQRDFWLNTQEALDYGLLGKVIRSVDELK</sequence>
<name>CLPP_PARDE</name>
<dbReference type="EC" id="3.4.21.92" evidence="1"/>
<dbReference type="EMBL" id="U34346">
    <property type="protein sequence ID" value="AAC44552.1"/>
    <property type="status" value="ALT_INIT"/>
    <property type="molecule type" value="Genomic_DNA"/>
</dbReference>
<dbReference type="SMR" id="P54414"/>
<dbReference type="BRENDA" id="3.4.21.92">
    <property type="organism ID" value="3341"/>
</dbReference>
<dbReference type="GO" id="GO:0005737">
    <property type="term" value="C:cytoplasm"/>
    <property type="evidence" value="ECO:0007669"/>
    <property type="project" value="UniProtKB-SubCell"/>
</dbReference>
<dbReference type="GO" id="GO:0009368">
    <property type="term" value="C:endopeptidase Clp complex"/>
    <property type="evidence" value="ECO:0007669"/>
    <property type="project" value="TreeGrafter"/>
</dbReference>
<dbReference type="GO" id="GO:0004176">
    <property type="term" value="F:ATP-dependent peptidase activity"/>
    <property type="evidence" value="ECO:0007669"/>
    <property type="project" value="InterPro"/>
</dbReference>
<dbReference type="GO" id="GO:0051117">
    <property type="term" value="F:ATPase binding"/>
    <property type="evidence" value="ECO:0007669"/>
    <property type="project" value="TreeGrafter"/>
</dbReference>
<dbReference type="GO" id="GO:0004252">
    <property type="term" value="F:serine-type endopeptidase activity"/>
    <property type="evidence" value="ECO:0007669"/>
    <property type="project" value="UniProtKB-UniRule"/>
</dbReference>
<dbReference type="GO" id="GO:0006515">
    <property type="term" value="P:protein quality control for misfolded or incompletely synthesized proteins"/>
    <property type="evidence" value="ECO:0007669"/>
    <property type="project" value="TreeGrafter"/>
</dbReference>
<dbReference type="CDD" id="cd07017">
    <property type="entry name" value="S14_ClpP_2"/>
    <property type="match status" value="1"/>
</dbReference>
<dbReference type="Gene3D" id="3.90.226.10">
    <property type="entry name" value="2-enoyl-CoA Hydratase, Chain A, domain 1"/>
    <property type="match status" value="1"/>
</dbReference>
<dbReference type="HAMAP" id="MF_00444">
    <property type="entry name" value="ClpP"/>
    <property type="match status" value="1"/>
</dbReference>
<dbReference type="InterPro" id="IPR001907">
    <property type="entry name" value="ClpP"/>
</dbReference>
<dbReference type="InterPro" id="IPR029045">
    <property type="entry name" value="ClpP/crotonase-like_dom_sf"/>
</dbReference>
<dbReference type="InterPro" id="IPR023562">
    <property type="entry name" value="ClpP/TepA"/>
</dbReference>
<dbReference type="InterPro" id="IPR033135">
    <property type="entry name" value="ClpP_His_AS"/>
</dbReference>
<dbReference type="NCBIfam" id="NF009205">
    <property type="entry name" value="PRK12553.1"/>
    <property type="match status" value="1"/>
</dbReference>
<dbReference type="PANTHER" id="PTHR10381">
    <property type="entry name" value="ATP-DEPENDENT CLP PROTEASE PROTEOLYTIC SUBUNIT"/>
    <property type="match status" value="1"/>
</dbReference>
<dbReference type="PANTHER" id="PTHR10381:SF70">
    <property type="entry name" value="ATP-DEPENDENT CLP PROTEASE PROTEOLYTIC SUBUNIT"/>
    <property type="match status" value="1"/>
</dbReference>
<dbReference type="Pfam" id="PF00574">
    <property type="entry name" value="CLP_protease"/>
    <property type="match status" value="1"/>
</dbReference>
<dbReference type="PRINTS" id="PR00127">
    <property type="entry name" value="CLPPROTEASEP"/>
</dbReference>
<dbReference type="SUPFAM" id="SSF52096">
    <property type="entry name" value="ClpP/crotonase"/>
    <property type="match status" value="1"/>
</dbReference>
<dbReference type="PROSITE" id="PS00382">
    <property type="entry name" value="CLP_PROTEASE_HIS"/>
    <property type="match status" value="1"/>
</dbReference>
<keyword id="KW-0963">Cytoplasm</keyword>
<keyword id="KW-0378">Hydrolase</keyword>
<keyword id="KW-0645">Protease</keyword>
<keyword id="KW-0720">Serine protease</keyword>
<feature type="chain" id="PRO_0000179610" description="ATP-dependent Clp protease proteolytic subunit">
    <location>
        <begin position="1"/>
        <end position="199"/>
    </location>
</feature>
<feature type="region of interest" description="Disordered" evidence="2">
    <location>
        <begin position="1"/>
        <end position="23"/>
    </location>
</feature>
<feature type="active site" description="Nucleophile" evidence="1">
    <location>
        <position position="100"/>
    </location>
</feature>
<feature type="active site" evidence="1">
    <location>
        <position position="125"/>
    </location>
</feature>
<accession>P54414</accession>
<evidence type="ECO:0000255" key="1">
    <source>
        <dbReference type="HAMAP-Rule" id="MF_00444"/>
    </source>
</evidence>
<evidence type="ECO:0000256" key="2">
    <source>
        <dbReference type="SAM" id="MobiDB-lite"/>
    </source>
</evidence>
<evidence type="ECO:0000305" key="3"/>